<name>VPS11_DROME</name>
<organism evidence="11">
    <name type="scientific">Drosophila melanogaster</name>
    <name type="common">Fruit fly</name>
    <dbReference type="NCBI Taxonomy" id="7227"/>
    <lineage>
        <taxon>Eukaryota</taxon>
        <taxon>Metazoa</taxon>
        <taxon>Ecdysozoa</taxon>
        <taxon>Arthropoda</taxon>
        <taxon>Hexapoda</taxon>
        <taxon>Insecta</taxon>
        <taxon>Pterygota</taxon>
        <taxon>Neoptera</taxon>
        <taxon>Endopterygota</taxon>
        <taxon>Diptera</taxon>
        <taxon>Brachycera</taxon>
        <taxon>Muscomorpha</taxon>
        <taxon>Ephydroidea</taxon>
        <taxon>Drosophilidae</taxon>
        <taxon>Drosophila</taxon>
        <taxon>Sophophora</taxon>
    </lineage>
</organism>
<proteinExistence type="evidence at protein level"/>
<keyword id="KW-0072">Autophagy</keyword>
<keyword id="KW-0967">Endosome</keyword>
<keyword id="KW-0458">Lysosome</keyword>
<keyword id="KW-0472">Membrane</keyword>
<keyword id="KW-0479">Metal-binding</keyword>
<keyword id="KW-0653">Protein transport</keyword>
<keyword id="KW-1185">Reference proteome</keyword>
<keyword id="KW-0813">Transport</keyword>
<keyword id="KW-0862">Zinc</keyword>
<keyword id="KW-0863">Zinc-finger</keyword>
<protein>
    <recommendedName>
        <fullName evidence="7">Vacuolar protein sorting-associated protein 11 homolog</fullName>
    </recommendedName>
</protein>
<reference evidence="11" key="1">
    <citation type="journal article" date="2000" name="Science">
        <title>The genome sequence of Drosophila melanogaster.</title>
        <authorList>
            <person name="Adams M.D."/>
            <person name="Celniker S.E."/>
            <person name="Holt R.A."/>
            <person name="Evans C.A."/>
            <person name="Gocayne J.D."/>
            <person name="Amanatides P.G."/>
            <person name="Scherer S.E."/>
            <person name="Li P.W."/>
            <person name="Hoskins R.A."/>
            <person name="Galle R.F."/>
            <person name="George R.A."/>
            <person name="Lewis S.E."/>
            <person name="Richards S."/>
            <person name="Ashburner M."/>
            <person name="Henderson S.N."/>
            <person name="Sutton G.G."/>
            <person name="Wortman J.R."/>
            <person name="Yandell M.D."/>
            <person name="Zhang Q."/>
            <person name="Chen L.X."/>
            <person name="Brandon R.C."/>
            <person name="Rogers Y.-H.C."/>
            <person name="Blazej R.G."/>
            <person name="Champe M."/>
            <person name="Pfeiffer B.D."/>
            <person name="Wan K.H."/>
            <person name="Doyle C."/>
            <person name="Baxter E.G."/>
            <person name="Helt G."/>
            <person name="Nelson C.R."/>
            <person name="Miklos G.L.G."/>
            <person name="Abril J.F."/>
            <person name="Agbayani A."/>
            <person name="An H.-J."/>
            <person name="Andrews-Pfannkoch C."/>
            <person name="Baldwin D."/>
            <person name="Ballew R.M."/>
            <person name="Basu A."/>
            <person name="Baxendale J."/>
            <person name="Bayraktaroglu L."/>
            <person name="Beasley E.M."/>
            <person name="Beeson K.Y."/>
            <person name="Benos P.V."/>
            <person name="Berman B.P."/>
            <person name="Bhandari D."/>
            <person name="Bolshakov S."/>
            <person name="Borkova D."/>
            <person name="Botchan M.R."/>
            <person name="Bouck J."/>
            <person name="Brokstein P."/>
            <person name="Brottier P."/>
            <person name="Burtis K.C."/>
            <person name="Busam D.A."/>
            <person name="Butler H."/>
            <person name="Cadieu E."/>
            <person name="Center A."/>
            <person name="Chandra I."/>
            <person name="Cherry J.M."/>
            <person name="Cawley S."/>
            <person name="Dahlke C."/>
            <person name="Davenport L.B."/>
            <person name="Davies P."/>
            <person name="de Pablos B."/>
            <person name="Delcher A."/>
            <person name="Deng Z."/>
            <person name="Mays A.D."/>
            <person name="Dew I."/>
            <person name="Dietz S.M."/>
            <person name="Dodson K."/>
            <person name="Doup L.E."/>
            <person name="Downes M."/>
            <person name="Dugan-Rocha S."/>
            <person name="Dunkov B.C."/>
            <person name="Dunn P."/>
            <person name="Durbin K.J."/>
            <person name="Evangelista C.C."/>
            <person name="Ferraz C."/>
            <person name="Ferriera S."/>
            <person name="Fleischmann W."/>
            <person name="Fosler C."/>
            <person name="Gabrielian A.E."/>
            <person name="Garg N.S."/>
            <person name="Gelbart W.M."/>
            <person name="Glasser K."/>
            <person name="Glodek A."/>
            <person name="Gong F."/>
            <person name="Gorrell J.H."/>
            <person name="Gu Z."/>
            <person name="Guan P."/>
            <person name="Harris M."/>
            <person name="Harris N.L."/>
            <person name="Harvey D.A."/>
            <person name="Heiman T.J."/>
            <person name="Hernandez J.R."/>
            <person name="Houck J."/>
            <person name="Hostin D."/>
            <person name="Houston K.A."/>
            <person name="Howland T.J."/>
            <person name="Wei M.-H."/>
            <person name="Ibegwam C."/>
            <person name="Jalali M."/>
            <person name="Kalush F."/>
            <person name="Karpen G.H."/>
            <person name="Ke Z."/>
            <person name="Kennison J.A."/>
            <person name="Ketchum K.A."/>
            <person name="Kimmel B.E."/>
            <person name="Kodira C.D."/>
            <person name="Kraft C.L."/>
            <person name="Kravitz S."/>
            <person name="Kulp D."/>
            <person name="Lai Z."/>
            <person name="Lasko P."/>
            <person name="Lei Y."/>
            <person name="Levitsky A.A."/>
            <person name="Li J.H."/>
            <person name="Li Z."/>
            <person name="Liang Y."/>
            <person name="Lin X."/>
            <person name="Liu X."/>
            <person name="Mattei B."/>
            <person name="McIntosh T.C."/>
            <person name="McLeod M.P."/>
            <person name="McPherson D."/>
            <person name="Merkulov G."/>
            <person name="Milshina N.V."/>
            <person name="Mobarry C."/>
            <person name="Morris J."/>
            <person name="Moshrefi A."/>
            <person name="Mount S.M."/>
            <person name="Moy M."/>
            <person name="Murphy B."/>
            <person name="Murphy L."/>
            <person name="Muzny D.M."/>
            <person name="Nelson D.L."/>
            <person name="Nelson D.R."/>
            <person name="Nelson K.A."/>
            <person name="Nixon K."/>
            <person name="Nusskern D.R."/>
            <person name="Pacleb J.M."/>
            <person name="Palazzolo M."/>
            <person name="Pittman G.S."/>
            <person name="Pan S."/>
            <person name="Pollard J."/>
            <person name="Puri V."/>
            <person name="Reese M.G."/>
            <person name="Reinert K."/>
            <person name="Remington K."/>
            <person name="Saunders R.D.C."/>
            <person name="Scheeler F."/>
            <person name="Shen H."/>
            <person name="Shue B.C."/>
            <person name="Siden-Kiamos I."/>
            <person name="Simpson M."/>
            <person name="Skupski M.P."/>
            <person name="Smith T.J."/>
            <person name="Spier E."/>
            <person name="Spradling A.C."/>
            <person name="Stapleton M."/>
            <person name="Strong R."/>
            <person name="Sun E."/>
            <person name="Svirskas R."/>
            <person name="Tector C."/>
            <person name="Turner R."/>
            <person name="Venter E."/>
            <person name="Wang A.H."/>
            <person name="Wang X."/>
            <person name="Wang Z.-Y."/>
            <person name="Wassarman D.A."/>
            <person name="Weinstock G.M."/>
            <person name="Weissenbach J."/>
            <person name="Williams S.M."/>
            <person name="Woodage T."/>
            <person name="Worley K.C."/>
            <person name="Wu D."/>
            <person name="Yang S."/>
            <person name="Yao Q.A."/>
            <person name="Ye J."/>
            <person name="Yeh R.-F."/>
            <person name="Zaveri J.S."/>
            <person name="Zhan M."/>
            <person name="Zhang G."/>
            <person name="Zhao Q."/>
            <person name="Zheng L."/>
            <person name="Zheng X.H."/>
            <person name="Zhong F.N."/>
            <person name="Zhong W."/>
            <person name="Zhou X."/>
            <person name="Zhu S.C."/>
            <person name="Zhu X."/>
            <person name="Smith H.O."/>
            <person name="Gibbs R.A."/>
            <person name="Myers E.W."/>
            <person name="Rubin G.M."/>
            <person name="Venter J.C."/>
        </authorList>
    </citation>
    <scope>NUCLEOTIDE SEQUENCE [LARGE SCALE GENOMIC DNA]</scope>
    <source>
        <strain evidence="11">Berkeley</strain>
    </source>
</reference>
<reference evidence="11" key="2">
    <citation type="journal article" date="2002" name="Genome Biol.">
        <title>Annotation of the Drosophila melanogaster euchromatic genome: a systematic review.</title>
        <authorList>
            <person name="Misra S."/>
            <person name="Crosby M.A."/>
            <person name="Mungall C.J."/>
            <person name="Matthews B.B."/>
            <person name="Campbell K.S."/>
            <person name="Hradecky P."/>
            <person name="Huang Y."/>
            <person name="Kaminker J.S."/>
            <person name="Millburn G.H."/>
            <person name="Prochnik S.E."/>
            <person name="Smith C.D."/>
            <person name="Tupy J.L."/>
            <person name="Whitfield E.J."/>
            <person name="Bayraktaroglu L."/>
            <person name="Berman B.P."/>
            <person name="Bettencourt B.R."/>
            <person name="Celniker S.E."/>
            <person name="de Grey A.D.N.J."/>
            <person name="Drysdale R.A."/>
            <person name="Harris N.L."/>
            <person name="Richter J."/>
            <person name="Russo S."/>
            <person name="Schroeder A.J."/>
            <person name="Shu S.Q."/>
            <person name="Stapleton M."/>
            <person name="Yamada C."/>
            <person name="Ashburner M."/>
            <person name="Gelbart W.M."/>
            <person name="Rubin G.M."/>
            <person name="Lewis S.E."/>
        </authorList>
    </citation>
    <scope>GENOME REANNOTATION</scope>
    <source>
        <strain evidence="11">Berkeley</strain>
    </source>
</reference>
<reference evidence="9" key="3">
    <citation type="journal article" date="2002" name="Genome Biol.">
        <title>A Drosophila full-length cDNA resource.</title>
        <authorList>
            <person name="Stapleton M."/>
            <person name="Carlson J.W."/>
            <person name="Brokstein P."/>
            <person name="Yu C."/>
            <person name="Champe M."/>
            <person name="George R.A."/>
            <person name="Guarin H."/>
            <person name="Kronmiller B."/>
            <person name="Pacleb J.M."/>
            <person name="Park S."/>
            <person name="Wan K.H."/>
            <person name="Rubin G.M."/>
            <person name="Celniker S.E."/>
        </authorList>
    </citation>
    <scope>NUCLEOTIDE SEQUENCE [LARGE SCALE MRNA]</scope>
    <source>
        <strain evidence="9">Berkeley</strain>
        <tissue evidence="9">Embryo</tissue>
    </source>
</reference>
<reference evidence="7" key="4">
    <citation type="journal article" date="2014" name="Mol. Biol. Cell">
        <title>Interaction of the HOPS complex with Syntaxin 17 mediates autophagosome clearance in Drosophila.</title>
        <authorList>
            <person name="Takats S."/>
            <person name="Pircs K."/>
            <person name="Nagy P."/>
            <person name="Varga A."/>
            <person name="Karpati M."/>
            <person name="Hegedus K."/>
            <person name="Kramer H."/>
            <person name="Kovacs A.L."/>
            <person name="Sass M."/>
            <person name="Juhasz G."/>
        </authorList>
    </citation>
    <scope>FUNCTION</scope>
    <scope>DISRUPTION PHENOTYPE</scope>
</reference>
<reference evidence="7" key="5">
    <citation type="journal article" date="2016" name="Elife">
        <title>MiniCORVET is a Vps8-containing early endosomal tether in Drosophila.</title>
        <authorList>
            <person name="Lorincz P."/>
            <person name="Lakatos Z."/>
            <person name="Varga A."/>
            <person name="Maruzs T."/>
            <person name="Simon-Vecsei Z."/>
            <person name="Darula Z."/>
            <person name="Benko P."/>
            <person name="Csordas G."/>
            <person name="Lippai M."/>
            <person name="Ando I."/>
            <person name="Hegedus K."/>
            <person name="Medzihradszky K.F."/>
            <person name="Takats S."/>
            <person name="Juhasz G."/>
        </authorList>
    </citation>
    <scope>FUNCTION</scope>
    <scope>SUBUNIT</scope>
</reference>
<reference evidence="7" key="6">
    <citation type="journal article" date="2017" name="Elife">
        <title>Genetic screen in Drosophila muscle identifies autophagy-mediated T-tubule remodeling and a Rab2 role in autophagy.</title>
        <authorList>
            <person name="Fujita N."/>
            <person name="Huang W."/>
            <person name="Lin T.H."/>
            <person name="Groulx J.F."/>
            <person name="Jean S."/>
            <person name="Nguyen J."/>
            <person name="Kuchitsu Y."/>
            <person name="Koyama-Honda I."/>
            <person name="Mizushima N."/>
            <person name="Fukuda M."/>
            <person name="Kiger A.A."/>
        </authorList>
    </citation>
    <scope>FUNCTION</scope>
    <scope>DISRUPTION PHENOTYPE</scope>
</reference>
<reference evidence="7" key="7">
    <citation type="journal article" date="2019" name="Elife">
        <title>Vps8 overexpression inhibits HOPS-dependent trafficking routes by outcompeting Vps41/Lt.</title>
        <authorList>
            <person name="Lorincz P."/>
            <person name="Kenez L.A."/>
            <person name="Toth S."/>
            <person name="Kiss V."/>
            <person name="Varga A."/>
            <person name="Csizmadia T."/>
            <person name="Simon-Vecsei Z."/>
            <person name="Juhasz G."/>
        </authorList>
    </citation>
    <scope>FUNCTION</scope>
</reference>
<feature type="chain" id="PRO_0000460248" description="Vacuolar protein sorting-associated protein 11 homolog">
    <location>
        <begin position="1"/>
        <end position="830"/>
    </location>
</feature>
<feature type="zinc finger region" description="RING-type; atypical" evidence="2">
    <location>
        <begin position="733"/>
        <end position="775"/>
    </location>
</feature>
<accession>Q8SX81</accession>
<dbReference type="EMBL" id="AE014296">
    <property type="protein sequence ID" value="AAN11410.1"/>
    <property type="molecule type" value="Genomic_DNA"/>
</dbReference>
<dbReference type="EMBL" id="AY094791">
    <property type="protein sequence ID" value="AAM11144.1"/>
    <property type="molecule type" value="mRNA"/>
</dbReference>
<dbReference type="RefSeq" id="NP_730776.1">
    <property type="nucleotide sequence ID" value="NM_168987.2"/>
</dbReference>
<dbReference type="SMR" id="Q8SX81"/>
<dbReference type="ComplexPortal" id="CPX-936">
    <property type="entry name" value="HOPS tethering complex"/>
</dbReference>
<dbReference type="FunCoup" id="Q8SX81">
    <property type="interactions" value="1124"/>
</dbReference>
<dbReference type="IntAct" id="Q8SX81">
    <property type="interactions" value="2"/>
</dbReference>
<dbReference type="STRING" id="7227.FBpp0070045"/>
<dbReference type="PaxDb" id="7227-FBpp0070045"/>
<dbReference type="EnsemblMetazoa" id="FBtr0070046">
    <property type="protein sequence ID" value="FBpp0070045"/>
    <property type="gene ID" value="FBgn0052350"/>
</dbReference>
<dbReference type="GeneID" id="317987"/>
<dbReference type="KEGG" id="dme:Dmel_CG32350"/>
<dbReference type="UCSC" id="CG32350-RA">
    <property type="organism name" value="d. melanogaster"/>
</dbReference>
<dbReference type="AGR" id="FB:FBgn0052350"/>
<dbReference type="CTD" id="55823"/>
<dbReference type="FlyBase" id="FBgn0052350">
    <property type="gene designation" value="Vps11"/>
</dbReference>
<dbReference type="VEuPathDB" id="VectorBase:FBgn0052350"/>
<dbReference type="eggNOG" id="KOG2114">
    <property type="taxonomic scope" value="Eukaryota"/>
</dbReference>
<dbReference type="GeneTree" id="ENSGT00940000153635"/>
<dbReference type="HOGENOM" id="CLU_387936_0_0_1"/>
<dbReference type="InParanoid" id="Q8SX81"/>
<dbReference type="OMA" id="SVLEWKK"/>
<dbReference type="OrthoDB" id="26184at2759"/>
<dbReference type="BioGRID-ORCS" id="317987">
    <property type="hits" value="1 hit in 1 CRISPR screen"/>
</dbReference>
<dbReference type="ChiTaRS" id="Vps11">
    <property type="organism name" value="fly"/>
</dbReference>
<dbReference type="GenomeRNAi" id="317987"/>
<dbReference type="Proteomes" id="UP000000803">
    <property type="component" value="Chromosome 3L"/>
</dbReference>
<dbReference type="Bgee" id="FBgn0052350">
    <property type="expression patterns" value="Expressed in cleaving embryo and 239 other cell types or tissues"/>
</dbReference>
<dbReference type="ExpressionAtlas" id="Q8SX81">
    <property type="expression patterns" value="baseline and differential"/>
</dbReference>
<dbReference type="GO" id="GO:0005768">
    <property type="term" value="C:endosome"/>
    <property type="evidence" value="ECO:0000318"/>
    <property type="project" value="GO_Central"/>
</dbReference>
<dbReference type="GO" id="GO:0030897">
    <property type="term" value="C:HOPS complex"/>
    <property type="evidence" value="ECO:0000315"/>
    <property type="project" value="FlyBase"/>
</dbReference>
<dbReference type="GO" id="GO:0031902">
    <property type="term" value="C:late endosome membrane"/>
    <property type="evidence" value="ECO:0007669"/>
    <property type="project" value="UniProtKB-SubCell"/>
</dbReference>
<dbReference type="GO" id="GO:0005765">
    <property type="term" value="C:lysosomal membrane"/>
    <property type="evidence" value="ECO:0007669"/>
    <property type="project" value="UniProtKB-SubCell"/>
</dbReference>
<dbReference type="GO" id="GO:0030674">
    <property type="term" value="F:protein-macromolecule adaptor activity"/>
    <property type="evidence" value="ECO:0000318"/>
    <property type="project" value="GO_Central"/>
</dbReference>
<dbReference type="GO" id="GO:0061630">
    <property type="term" value="F:ubiquitin protein ligase activity"/>
    <property type="evidence" value="ECO:0000250"/>
    <property type="project" value="FlyBase"/>
</dbReference>
<dbReference type="GO" id="GO:0004842">
    <property type="term" value="F:ubiquitin-protein transferase activity"/>
    <property type="evidence" value="ECO:0000250"/>
    <property type="project" value="FlyBase"/>
</dbReference>
<dbReference type="GO" id="GO:0008270">
    <property type="term" value="F:zinc ion binding"/>
    <property type="evidence" value="ECO:0000255"/>
    <property type="project" value="FlyBase"/>
</dbReference>
<dbReference type="GO" id="GO:0097352">
    <property type="term" value="P:autophagosome maturation"/>
    <property type="evidence" value="ECO:0000315"/>
    <property type="project" value="FlyBase"/>
</dbReference>
<dbReference type="GO" id="GO:0009267">
    <property type="term" value="P:cellular response to starvation"/>
    <property type="evidence" value="ECO:0000315"/>
    <property type="project" value="FlyBase"/>
</dbReference>
<dbReference type="GO" id="GO:0016197">
    <property type="term" value="P:endosomal transport"/>
    <property type="evidence" value="ECO:0000250"/>
    <property type="project" value="FlyBase"/>
</dbReference>
<dbReference type="GO" id="GO:0034058">
    <property type="term" value="P:endosomal vesicle fusion"/>
    <property type="evidence" value="ECO:0000315"/>
    <property type="project" value="UniProtKB"/>
</dbReference>
<dbReference type="GO" id="GO:0007032">
    <property type="term" value="P:endosome organization"/>
    <property type="evidence" value="ECO:0000318"/>
    <property type="project" value="GO_Central"/>
</dbReference>
<dbReference type="GO" id="GO:0007041">
    <property type="term" value="P:lysosomal transport"/>
    <property type="evidence" value="ECO:0000315"/>
    <property type="project" value="FlyBase"/>
</dbReference>
<dbReference type="GO" id="GO:0048284">
    <property type="term" value="P:organelle fusion"/>
    <property type="evidence" value="ECO:0000318"/>
    <property type="project" value="GO_Central"/>
</dbReference>
<dbReference type="GO" id="GO:0015031">
    <property type="term" value="P:protein transport"/>
    <property type="evidence" value="ECO:0007669"/>
    <property type="project" value="UniProtKB-KW"/>
</dbReference>
<dbReference type="GO" id="GO:0016567">
    <property type="term" value="P:protein ubiquitination"/>
    <property type="evidence" value="ECO:0000250"/>
    <property type="project" value="FlyBase"/>
</dbReference>
<dbReference type="GO" id="GO:0035542">
    <property type="term" value="P:regulation of SNARE complex assembly"/>
    <property type="evidence" value="ECO:0000250"/>
    <property type="project" value="FlyBase"/>
</dbReference>
<dbReference type="GO" id="GO:0046718">
    <property type="term" value="P:symbiont entry into host cell"/>
    <property type="evidence" value="ECO:0007001"/>
    <property type="project" value="FlyBase"/>
</dbReference>
<dbReference type="GO" id="GO:0033292">
    <property type="term" value="P:T-tubule organization"/>
    <property type="evidence" value="ECO:0000315"/>
    <property type="project" value="UniProtKB"/>
</dbReference>
<dbReference type="GO" id="GO:0007033">
    <property type="term" value="P:vacuole organization"/>
    <property type="evidence" value="ECO:0000318"/>
    <property type="project" value="GO_Central"/>
</dbReference>
<dbReference type="GO" id="GO:0006904">
    <property type="term" value="P:vesicle docking involved in exocytosis"/>
    <property type="evidence" value="ECO:0000318"/>
    <property type="project" value="GO_Central"/>
</dbReference>
<dbReference type="CDD" id="cd16688">
    <property type="entry name" value="RING-H2_Vps11"/>
    <property type="match status" value="1"/>
</dbReference>
<dbReference type="Gene3D" id="3.30.40.10">
    <property type="entry name" value="Zinc/RING finger domain, C3HC4 (zinc finger)"/>
    <property type="match status" value="1"/>
</dbReference>
<dbReference type="InterPro" id="IPR001841">
    <property type="entry name" value="Znf_RING"/>
</dbReference>
<dbReference type="InterPro" id="IPR013083">
    <property type="entry name" value="Znf_RING/FYVE/PHD"/>
</dbReference>
<dbReference type="PANTHER" id="PTHR23323">
    <property type="entry name" value="VACUOLAR PROTEIN SORTING-ASSOCIATED PROTEIN"/>
    <property type="match status" value="1"/>
</dbReference>
<dbReference type="PANTHER" id="PTHR23323:SF24">
    <property type="entry name" value="VACUOLAR PROTEIN SORTING-ASSOCIATED PROTEIN 11 HOMOLOG"/>
    <property type="match status" value="1"/>
</dbReference>
<dbReference type="Pfam" id="PF23341">
    <property type="entry name" value="PEP5_VPS11_N"/>
    <property type="match status" value="1"/>
</dbReference>
<dbReference type="Pfam" id="PF23356">
    <property type="entry name" value="TPR_PEP5_VPS11"/>
    <property type="match status" value="1"/>
</dbReference>
<dbReference type="SUPFAM" id="SSF57850">
    <property type="entry name" value="RING/U-box"/>
    <property type="match status" value="1"/>
</dbReference>
<dbReference type="PROSITE" id="PS50089">
    <property type="entry name" value="ZF_RING_2"/>
    <property type="match status" value="1"/>
</dbReference>
<gene>
    <name evidence="10" type="primary">Vps11</name>
    <name evidence="10" type="ORF">CG32350</name>
</gene>
<sequence>MDISVFEWKKVDLFNIIVVPFVKIPNTAEISCYCFPESKSSTEERNIKLVICDKNRNILIYLSNWECITFKSPSTRKAIALCSLTSNNSLATVTPDINNGIHIDIFDLNRLTKKQAAPIIASAYTQPSSTPLCLNADVIDDKLFALAIGLGNGDILLHYGKITKNFSANIRQHTVSGNAVNGIHFDFKTQPLDTTQIMFVTCVQGVYCFMLKEKCIMDTKFVLDNDKGNLNYRSIMCKAGGGEINDSMLVVGRADAVYCYTPEGRGPCFAIEGAKECLAWVGHYLIVGVKNSNLKQNATTLIVLDTENKIIVFQRQFQELFYVISENNFCYIVTNSGDTDACNMLMLEKNSIDVNIRLLVEKHMYNIALRLLHREGYTSSPETALVRFQYGNHLLQKGDFSRATQEFIKTIGFIKPYAVISKLLYSRYNTYLLNYLTEWKKKNESSSCHTRLIECCIKRDQIEHEMQQDDFKHYKSPAKIKHLATLSKMYFACTPSNQVPVEEEHLLHQLLEYGPASLAVDLTTYLNNITFENVKESKNILSFCSILADHNDYCAKMLAKIIEAFPVCDEKLLFYLLVFYFKLWRLDKVTSSFVSDFIKTHSLRMDKTIIVSRLYTFFNVTQRIHGHQKNTGTLHNETIDKCIENLIKNNPDVALNENLSKRSFLMMLKSSCSTEEIKAIKIKPIFKDRLLRSIVDSANELKLVENFNEKIKRSRSMLSLYTNNPIEFRNDKCDICREMLSMQSIYFLCQHSFHEECLNYKSTKRQEKFLCIICKTRNLLSPKHSSNFSCDSSDTIAVLAKIVSIGNKLETKLMIRGRQKSDGVTCNPFN</sequence>
<evidence type="ECO:0000250" key="1">
    <source>
        <dbReference type="UniProtKB" id="Q9H270"/>
    </source>
</evidence>
<evidence type="ECO:0000255" key="2">
    <source>
        <dbReference type="PROSITE-ProRule" id="PRU00175"/>
    </source>
</evidence>
<evidence type="ECO:0000269" key="3">
    <source>
    </source>
</evidence>
<evidence type="ECO:0000269" key="4">
    <source>
    </source>
</evidence>
<evidence type="ECO:0000269" key="5">
    <source>
    </source>
</evidence>
<evidence type="ECO:0000269" key="6">
    <source>
    </source>
</evidence>
<evidence type="ECO:0000305" key="7"/>
<evidence type="ECO:0000305" key="8">
    <source>
    </source>
</evidence>
<evidence type="ECO:0000312" key="9">
    <source>
        <dbReference type="EMBL" id="AAM11144.1"/>
    </source>
</evidence>
<evidence type="ECO:0000312" key="10">
    <source>
        <dbReference type="FlyBase" id="FBgn0052350"/>
    </source>
</evidence>
<evidence type="ECO:0000312" key="11">
    <source>
        <dbReference type="Proteomes" id="UP000000803"/>
    </source>
</evidence>
<comment type="function">
    <text evidence="3 4 5 6">Part of the homotypic fusion and vacuole protein sorting (HOPS) tethering complex involved in endo-lysosomal vesicle trafficking and lysosome biogenesis, but unlike in many other species does not form part of the class C core vacuole/endosome tethering (CORVET) complex (PubMed:24554766, PubMed:27253064, PubMed:28063257, PubMed:31194677). The HOPS complex facilitates docking and fusion of lysosomes with late endosomes and several other types of vesicles (PubMed:24554766, PubMed:31194677). The HOPS complex is also involved in autophagy, pigment granule biogenesis and crinophagy (the elimination of unused secretory granules through fusion with lysosomes) (PubMed:24554766, PubMed:31194677). The HOPS complex probably instigates autophagosome-lysosome fusion by binding autophagosome-associated Syx17/syntaxin 17 and promoting assembly of the trans-SNARE complex (PubMed:24554766, PubMed:28063257). Independent of Syx17/syntaxin 17, HOPS is involved in biosynthetic transport to lysosomes and lysosome-related organelles such as eye-pigment granules (PubMed:24554766, PubMed:31194677). Required for autophagocytosis-dependent remodeling of myofibrils and transverse-tubules (T-tubules) during metamorphosis (PubMed:28063257).</text>
</comment>
<comment type="subunit">
    <text evidence="4 8">Part of the homotypic fusion and vacuole protein sorting (HOPS) complex, composed of Vps16A, car/Vps33A, dor/Vps18, Vps39, Vps11 and lt/Vps41 (Probable). Unlike in other species, not part of the class C core vacuole/endosome tethering (CORVET) complex (PubMed:27253064).</text>
</comment>
<comment type="subcellular location">
    <subcellularLocation>
        <location evidence="1">Late endosome membrane</location>
        <topology evidence="1">Peripheral membrane protein</topology>
        <orientation evidence="1">Cytoplasmic side</orientation>
    </subcellularLocation>
    <subcellularLocation>
        <location evidence="1">Lysosome membrane</location>
        <topology evidence="1">Peripheral membrane protein</topology>
        <orientation evidence="1">Cytoplasmic side</orientation>
    </subcellularLocation>
</comment>
<comment type="disruption phenotype">
    <text evidence="3 5">Impaired autophagosome clearance in fat body cells of starved 3rd instar (L3) larvae (PubMed:24554766). Conditional RNAi-mediated knock-down in muscle cells disrupts transverse-tubule (T-tubule) and myofibril remodeling in internal oblique muscles during metamorphosis (PubMed:28063257).</text>
</comment>
<comment type="similarity">
    <text evidence="7">Belongs to the VPS11 family.</text>
</comment>